<organism>
    <name type="scientific">Burkholderia cenocepacia (strain ATCC BAA-245 / DSM 16553 / LMG 16656 / NCTC 13227 / J2315 / CF5610)</name>
    <name type="common">Burkholderia cepacia (strain J2315)</name>
    <dbReference type="NCBI Taxonomy" id="216591"/>
    <lineage>
        <taxon>Bacteria</taxon>
        <taxon>Pseudomonadati</taxon>
        <taxon>Pseudomonadota</taxon>
        <taxon>Betaproteobacteria</taxon>
        <taxon>Burkholderiales</taxon>
        <taxon>Burkholderiaceae</taxon>
        <taxon>Burkholderia</taxon>
        <taxon>Burkholderia cepacia complex</taxon>
    </lineage>
</organism>
<gene>
    <name evidence="1" type="primary">plsY</name>
    <name type="ordered locus">BceJ2315_27080</name>
    <name type="ORF">BCAL2770</name>
</gene>
<dbReference type="EC" id="2.3.1.275" evidence="1"/>
<dbReference type="EMBL" id="AM747720">
    <property type="protein sequence ID" value="CAR53070.1"/>
    <property type="molecule type" value="Genomic_DNA"/>
</dbReference>
<dbReference type="RefSeq" id="WP_006482488.1">
    <property type="nucleotide sequence ID" value="NC_011000.1"/>
</dbReference>
<dbReference type="SMR" id="B4E9G9"/>
<dbReference type="GeneID" id="56559142"/>
<dbReference type="KEGG" id="bcj:BCAL2770"/>
<dbReference type="eggNOG" id="COG0344">
    <property type="taxonomic scope" value="Bacteria"/>
</dbReference>
<dbReference type="HOGENOM" id="CLU_081254_0_0_4"/>
<dbReference type="BioCyc" id="BCEN216591:G1G1V-3069-MONOMER"/>
<dbReference type="UniPathway" id="UPA00085"/>
<dbReference type="Proteomes" id="UP000001035">
    <property type="component" value="Chromosome 1"/>
</dbReference>
<dbReference type="GO" id="GO:0005886">
    <property type="term" value="C:plasma membrane"/>
    <property type="evidence" value="ECO:0007669"/>
    <property type="project" value="UniProtKB-SubCell"/>
</dbReference>
<dbReference type="GO" id="GO:0043772">
    <property type="term" value="F:acyl-phosphate glycerol-3-phosphate acyltransferase activity"/>
    <property type="evidence" value="ECO:0007669"/>
    <property type="project" value="UniProtKB-UniRule"/>
</dbReference>
<dbReference type="GO" id="GO:0008654">
    <property type="term" value="P:phospholipid biosynthetic process"/>
    <property type="evidence" value="ECO:0007669"/>
    <property type="project" value="UniProtKB-UniRule"/>
</dbReference>
<dbReference type="HAMAP" id="MF_01043">
    <property type="entry name" value="PlsY"/>
    <property type="match status" value="1"/>
</dbReference>
<dbReference type="InterPro" id="IPR003811">
    <property type="entry name" value="G3P_acylTferase_PlsY"/>
</dbReference>
<dbReference type="NCBIfam" id="TIGR00023">
    <property type="entry name" value="glycerol-3-phosphate 1-O-acyltransferase PlsY"/>
    <property type="match status" value="1"/>
</dbReference>
<dbReference type="PANTHER" id="PTHR30309:SF0">
    <property type="entry name" value="GLYCEROL-3-PHOSPHATE ACYLTRANSFERASE-RELATED"/>
    <property type="match status" value="1"/>
</dbReference>
<dbReference type="PANTHER" id="PTHR30309">
    <property type="entry name" value="INNER MEMBRANE PROTEIN YGIH"/>
    <property type="match status" value="1"/>
</dbReference>
<dbReference type="Pfam" id="PF02660">
    <property type="entry name" value="G3P_acyltransf"/>
    <property type="match status" value="1"/>
</dbReference>
<dbReference type="SMART" id="SM01207">
    <property type="entry name" value="G3P_acyltransf"/>
    <property type="match status" value="1"/>
</dbReference>
<accession>B4E9G9</accession>
<name>PLSY_BURCJ</name>
<proteinExistence type="inferred from homology"/>
<sequence>MQILLAALVAYLIGSVSFAVVVSSVMGLADPRSYGSKNPGATNVLRSGNKKAAILTLVGDAFKGWIAVWLARHFGLPDVAVAWVAIAVFLGHLYPVFFRFQGGKGVATAAGVLLAVHPVLGLATALTWLIVAFFFRYSSLAALVAAVFAPVFDVFLFGTPGHNPVAWAVLAMSVLLVWRHRGNISKLLAGQESRIGDKKKAAADGGAQDGGKA</sequence>
<evidence type="ECO:0000255" key="1">
    <source>
        <dbReference type="HAMAP-Rule" id="MF_01043"/>
    </source>
</evidence>
<reference key="1">
    <citation type="journal article" date="2009" name="J. Bacteriol.">
        <title>The genome of Burkholderia cenocepacia J2315, an epidemic pathogen of cystic fibrosis patients.</title>
        <authorList>
            <person name="Holden M.T."/>
            <person name="Seth-Smith H.M."/>
            <person name="Crossman L.C."/>
            <person name="Sebaihia M."/>
            <person name="Bentley S.D."/>
            <person name="Cerdeno-Tarraga A.M."/>
            <person name="Thomson N.R."/>
            <person name="Bason N."/>
            <person name="Quail M.A."/>
            <person name="Sharp S."/>
            <person name="Cherevach I."/>
            <person name="Churcher C."/>
            <person name="Goodhead I."/>
            <person name="Hauser H."/>
            <person name="Holroyd N."/>
            <person name="Mungall K."/>
            <person name="Scott P."/>
            <person name="Walker D."/>
            <person name="White B."/>
            <person name="Rose H."/>
            <person name="Iversen P."/>
            <person name="Mil-Homens D."/>
            <person name="Rocha E.P."/>
            <person name="Fialho A.M."/>
            <person name="Baldwin A."/>
            <person name="Dowson C."/>
            <person name="Barrell B.G."/>
            <person name="Govan J.R."/>
            <person name="Vandamme P."/>
            <person name="Hart C.A."/>
            <person name="Mahenthiralingam E."/>
            <person name="Parkhill J."/>
        </authorList>
    </citation>
    <scope>NUCLEOTIDE SEQUENCE [LARGE SCALE GENOMIC DNA]</scope>
    <source>
        <strain>ATCC BAA-245 / DSM 16553 / LMG 16656 / NCTC 13227 / J2315 / CF5610</strain>
    </source>
</reference>
<feature type="chain" id="PRO_1000136069" description="Glycerol-3-phosphate acyltransferase">
    <location>
        <begin position="1"/>
        <end position="213"/>
    </location>
</feature>
<feature type="transmembrane region" description="Helical" evidence="1">
    <location>
        <begin position="3"/>
        <end position="23"/>
    </location>
</feature>
<feature type="transmembrane region" description="Helical" evidence="1">
    <location>
        <begin position="51"/>
        <end position="71"/>
    </location>
</feature>
<feature type="transmembrane region" description="Helical" evidence="1">
    <location>
        <begin position="78"/>
        <end position="98"/>
    </location>
</feature>
<feature type="transmembrane region" description="Helical" evidence="1">
    <location>
        <begin position="115"/>
        <end position="135"/>
    </location>
</feature>
<feature type="transmembrane region" description="Helical" evidence="1">
    <location>
        <begin position="140"/>
        <end position="160"/>
    </location>
</feature>
<comment type="function">
    <text evidence="1">Catalyzes the transfer of an acyl group from acyl-phosphate (acyl-PO(4)) to glycerol-3-phosphate (G3P) to form lysophosphatidic acid (LPA). This enzyme utilizes acyl-phosphate as fatty acyl donor, but not acyl-CoA or acyl-ACP.</text>
</comment>
<comment type="catalytic activity">
    <reaction evidence="1">
        <text>an acyl phosphate + sn-glycerol 3-phosphate = a 1-acyl-sn-glycero-3-phosphate + phosphate</text>
        <dbReference type="Rhea" id="RHEA:34075"/>
        <dbReference type="ChEBI" id="CHEBI:43474"/>
        <dbReference type="ChEBI" id="CHEBI:57597"/>
        <dbReference type="ChEBI" id="CHEBI:57970"/>
        <dbReference type="ChEBI" id="CHEBI:59918"/>
        <dbReference type="EC" id="2.3.1.275"/>
    </reaction>
</comment>
<comment type="pathway">
    <text evidence="1">Lipid metabolism; phospholipid metabolism.</text>
</comment>
<comment type="subunit">
    <text evidence="1">Probably interacts with PlsX.</text>
</comment>
<comment type="subcellular location">
    <subcellularLocation>
        <location evidence="1">Cell inner membrane</location>
        <topology evidence="1">Multi-pass membrane protein</topology>
    </subcellularLocation>
</comment>
<comment type="similarity">
    <text evidence="1">Belongs to the PlsY family.</text>
</comment>
<protein>
    <recommendedName>
        <fullName evidence="1">Glycerol-3-phosphate acyltransferase</fullName>
    </recommendedName>
    <alternativeName>
        <fullName evidence="1">Acyl-PO4 G3P acyltransferase</fullName>
    </alternativeName>
    <alternativeName>
        <fullName evidence="1">Acyl-phosphate--glycerol-3-phosphate acyltransferase</fullName>
    </alternativeName>
    <alternativeName>
        <fullName evidence="1">G3P acyltransferase</fullName>
        <shortName evidence="1">GPAT</shortName>
        <ecNumber evidence="1">2.3.1.275</ecNumber>
    </alternativeName>
    <alternativeName>
        <fullName evidence="1">Lysophosphatidic acid synthase</fullName>
        <shortName evidence="1">LPA synthase</shortName>
    </alternativeName>
</protein>
<keyword id="KW-0997">Cell inner membrane</keyword>
<keyword id="KW-1003">Cell membrane</keyword>
<keyword id="KW-0444">Lipid biosynthesis</keyword>
<keyword id="KW-0443">Lipid metabolism</keyword>
<keyword id="KW-0472">Membrane</keyword>
<keyword id="KW-0594">Phospholipid biosynthesis</keyword>
<keyword id="KW-1208">Phospholipid metabolism</keyword>
<keyword id="KW-0808">Transferase</keyword>
<keyword id="KW-0812">Transmembrane</keyword>
<keyword id="KW-1133">Transmembrane helix</keyword>